<keyword id="KW-0687">Ribonucleoprotein</keyword>
<keyword id="KW-0689">Ribosomal protein</keyword>
<keyword id="KW-0694">RNA-binding</keyword>
<keyword id="KW-0699">rRNA-binding</keyword>
<sequence>MARYLGPKLKLSRREGTDLFLKSGVRAIDSKCKLETAPGQHGARKPRLSEYGTQLREKQKVRRIYGVLEKQFRNYYKDAARTKGNTGENLLQLLETRLDNVVYRMGFGATRAESRQLVSHKSIMVNGRVVNIPSFKVSANDVVSIREKSRTQARIKAALEVAAQREKPTWVEVDNAKMEGAFKRVPERSDLSAEINEQLIVELYSK</sequence>
<gene>
    <name evidence="1" type="primary">rpsD</name>
    <name type="ordered locus">Shew185_0220</name>
</gene>
<comment type="function">
    <text evidence="1">One of the primary rRNA binding proteins, it binds directly to 16S rRNA where it nucleates assembly of the body of the 30S subunit.</text>
</comment>
<comment type="function">
    <text evidence="1">With S5 and S12 plays an important role in translational accuracy.</text>
</comment>
<comment type="subunit">
    <text evidence="1">Part of the 30S ribosomal subunit. Contacts protein S5. The interaction surface between S4 and S5 is involved in control of translational fidelity.</text>
</comment>
<comment type="similarity">
    <text evidence="1">Belongs to the universal ribosomal protein uS4 family.</text>
</comment>
<organism>
    <name type="scientific">Shewanella baltica (strain OS185)</name>
    <dbReference type="NCBI Taxonomy" id="402882"/>
    <lineage>
        <taxon>Bacteria</taxon>
        <taxon>Pseudomonadati</taxon>
        <taxon>Pseudomonadota</taxon>
        <taxon>Gammaproteobacteria</taxon>
        <taxon>Alteromonadales</taxon>
        <taxon>Shewanellaceae</taxon>
        <taxon>Shewanella</taxon>
    </lineage>
</organism>
<feature type="chain" id="PRO_0000322333" description="Small ribosomal subunit protein uS4">
    <location>
        <begin position="1"/>
        <end position="206"/>
    </location>
</feature>
<feature type="domain" description="S4 RNA-binding" evidence="1">
    <location>
        <begin position="96"/>
        <end position="156"/>
    </location>
</feature>
<protein>
    <recommendedName>
        <fullName evidence="1">Small ribosomal subunit protein uS4</fullName>
    </recommendedName>
    <alternativeName>
        <fullName evidence="2">30S ribosomal protein S4</fullName>
    </alternativeName>
</protein>
<name>RS4_SHEB8</name>
<accession>A6WHV2</accession>
<proteinExistence type="inferred from homology"/>
<dbReference type="EMBL" id="CP000753">
    <property type="protein sequence ID" value="ABS06391.1"/>
    <property type="molecule type" value="Genomic_DNA"/>
</dbReference>
<dbReference type="RefSeq" id="WP_006083575.1">
    <property type="nucleotide sequence ID" value="NC_009665.1"/>
</dbReference>
<dbReference type="SMR" id="A6WHV2"/>
<dbReference type="GeneID" id="11770579"/>
<dbReference type="KEGG" id="sbm:Shew185_0220"/>
<dbReference type="HOGENOM" id="CLU_092403_0_2_6"/>
<dbReference type="GO" id="GO:0015935">
    <property type="term" value="C:small ribosomal subunit"/>
    <property type="evidence" value="ECO:0007669"/>
    <property type="project" value="InterPro"/>
</dbReference>
<dbReference type="GO" id="GO:0019843">
    <property type="term" value="F:rRNA binding"/>
    <property type="evidence" value="ECO:0007669"/>
    <property type="project" value="UniProtKB-UniRule"/>
</dbReference>
<dbReference type="GO" id="GO:0003735">
    <property type="term" value="F:structural constituent of ribosome"/>
    <property type="evidence" value="ECO:0007669"/>
    <property type="project" value="InterPro"/>
</dbReference>
<dbReference type="GO" id="GO:0042274">
    <property type="term" value="P:ribosomal small subunit biogenesis"/>
    <property type="evidence" value="ECO:0007669"/>
    <property type="project" value="TreeGrafter"/>
</dbReference>
<dbReference type="GO" id="GO:0006412">
    <property type="term" value="P:translation"/>
    <property type="evidence" value="ECO:0007669"/>
    <property type="project" value="UniProtKB-UniRule"/>
</dbReference>
<dbReference type="CDD" id="cd00165">
    <property type="entry name" value="S4"/>
    <property type="match status" value="1"/>
</dbReference>
<dbReference type="FunFam" id="1.10.1050.10:FF:000001">
    <property type="entry name" value="30S ribosomal protein S4"/>
    <property type="match status" value="1"/>
</dbReference>
<dbReference type="FunFam" id="3.10.290.10:FF:000001">
    <property type="entry name" value="30S ribosomal protein S4"/>
    <property type="match status" value="1"/>
</dbReference>
<dbReference type="Gene3D" id="1.10.1050.10">
    <property type="entry name" value="Ribosomal Protein S4 Delta 41, Chain A, domain 1"/>
    <property type="match status" value="1"/>
</dbReference>
<dbReference type="Gene3D" id="3.10.290.10">
    <property type="entry name" value="RNA-binding S4 domain"/>
    <property type="match status" value="1"/>
</dbReference>
<dbReference type="HAMAP" id="MF_01306_B">
    <property type="entry name" value="Ribosomal_uS4_B"/>
    <property type="match status" value="1"/>
</dbReference>
<dbReference type="InterPro" id="IPR022801">
    <property type="entry name" value="Ribosomal_uS4"/>
</dbReference>
<dbReference type="InterPro" id="IPR005709">
    <property type="entry name" value="Ribosomal_uS4_bac-type"/>
</dbReference>
<dbReference type="InterPro" id="IPR018079">
    <property type="entry name" value="Ribosomal_uS4_CS"/>
</dbReference>
<dbReference type="InterPro" id="IPR001912">
    <property type="entry name" value="Ribosomal_uS4_N"/>
</dbReference>
<dbReference type="InterPro" id="IPR002942">
    <property type="entry name" value="S4_RNA-bd"/>
</dbReference>
<dbReference type="InterPro" id="IPR036986">
    <property type="entry name" value="S4_RNA-bd_sf"/>
</dbReference>
<dbReference type="NCBIfam" id="NF003717">
    <property type="entry name" value="PRK05327.1"/>
    <property type="match status" value="1"/>
</dbReference>
<dbReference type="NCBIfam" id="TIGR01017">
    <property type="entry name" value="rpsD_bact"/>
    <property type="match status" value="1"/>
</dbReference>
<dbReference type="PANTHER" id="PTHR11831">
    <property type="entry name" value="30S 40S RIBOSOMAL PROTEIN"/>
    <property type="match status" value="1"/>
</dbReference>
<dbReference type="PANTHER" id="PTHR11831:SF4">
    <property type="entry name" value="SMALL RIBOSOMAL SUBUNIT PROTEIN US4M"/>
    <property type="match status" value="1"/>
</dbReference>
<dbReference type="Pfam" id="PF00163">
    <property type="entry name" value="Ribosomal_S4"/>
    <property type="match status" value="1"/>
</dbReference>
<dbReference type="Pfam" id="PF01479">
    <property type="entry name" value="S4"/>
    <property type="match status" value="1"/>
</dbReference>
<dbReference type="SMART" id="SM01390">
    <property type="entry name" value="Ribosomal_S4"/>
    <property type="match status" value="1"/>
</dbReference>
<dbReference type="SMART" id="SM00363">
    <property type="entry name" value="S4"/>
    <property type="match status" value="1"/>
</dbReference>
<dbReference type="SUPFAM" id="SSF55174">
    <property type="entry name" value="Alpha-L RNA-binding motif"/>
    <property type="match status" value="1"/>
</dbReference>
<dbReference type="PROSITE" id="PS00632">
    <property type="entry name" value="RIBOSOMAL_S4"/>
    <property type="match status" value="1"/>
</dbReference>
<dbReference type="PROSITE" id="PS50889">
    <property type="entry name" value="S4"/>
    <property type="match status" value="1"/>
</dbReference>
<reference key="1">
    <citation type="submission" date="2007-07" db="EMBL/GenBank/DDBJ databases">
        <title>Complete sequence of chromosome of Shewanella baltica OS185.</title>
        <authorList>
            <consortium name="US DOE Joint Genome Institute"/>
            <person name="Copeland A."/>
            <person name="Lucas S."/>
            <person name="Lapidus A."/>
            <person name="Barry K."/>
            <person name="Glavina del Rio T."/>
            <person name="Dalin E."/>
            <person name="Tice H."/>
            <person name="Pitluck S."/>
            <person name="Sims D."/>
            <person name="Brettin T."/>
            <person name="Bruce D."/>
            <person name="Detter J.C."/>
            <person name="Han C."/>
            <person name="Schmutz J."/>
            <person name="Larimer F."/>
            <person name="Land M."/>
            <person name="Hauser L."/>
            <person name="Kyrpides N."/>
            <person name="Mikhailova N."/>
            <person name="Brettar I."/>
            <person name="Rodrigues J."/>
            <person name="Konstantinidis K."/>
            <person name="Tiedje J."/>
            <person name="Richardson P."/>
        </authorList>
    </citation>
    <scope>NUCLEOTIDE SEQUENCE [LARGE SCALE GENOMIC DNA]</scope>
    <source>
        <strain>OS185</strain>
    </source>
</reference>
<evidence type="ECO:0000255" key="1">
    <source>
        <dbReference type="HAMAP-Rule" id="MF_01306"/>
    </source>
</evidence>
<evidence type="ECO:0000305" key="2"/>